<accession>Q9QX74</accession>
<accession>O70470</accession>
<accession>Q6WB19</accession>
<accession>Q9QX93</accession>
<accession>Q9QZZ9</accession>
<accession>Q9WUV9</accession>
<accession>Q9WUW0</accession>
<accession>Q9WV46</accession>
<feature type="chain" id="PRO_0000174674" description="SH3 and multiple ankyrin repeat domains protein 2">
    <location>
        <begin position="1"/>
        <end position="1474"/>
    </location>
</feature>
<feature type="domain" description="SH3" evidence="6">
    <location>
        <begin position="148"/>
        <end position="207"/>
    </location>
</feature>
<feature type="domain" description="PDZ" evidence="4">
    <location>
        <begin position="248"/>
        <end position="342"/>
    </location>
</feature>
<feature type="domain" description="SAM" evidence="5">
    <location>
        <begin position="1411"/>
        <end position="1474"/>
    </location>
</feature>
<feature type="region of interest" description="Disordered" evidence="7">
    <location>
        <begin position="66"/>
        <end position="125"/>
    </location>
</feature>
<feature type="region of interest" description="Disordered" evidence="7">
    <location>
        <begin position="392"/>
        <end position="413"/>
    </location>
</feature>
<feature type="region of interest" description="Disordered" evidence="7">
    <location>
        <begin position="504"/>
        <end position="534"/>
    </location>
</feature>
<feature type="region of interest" description="Disordered" evidence="7">
    <location>
        <begin position="659"/>
        <end position="920"/>
    </location>
</feature>
<feature type="region of interest" description="Disordered" evidence="7">
    <location>
        <begin position="947"/>
        <end position="995"/>
    </location>
</feature>
<feature type="region of interest" description="Disordered" evidence="7">
    <location>
        <begin position="1057"/>
        <end position="1153"/>
    </location>
</feature>
<feature type="region of interest" description="Disordered" evidence="7">
    <location>
        <begin position="1195"/>
        <end position="1216"/>
    </location>
</feature>
<feature type="region of interest" description="Disordered" evidence="7">
    <location>
        <begin position="1260"/>
        <end position="1401"/>
    </location>
</feature>
<feature type="short sequence motif" description="SH3-binding" evidence="3">
    <location>
        <begin position="1169"/>
        <end position="1175"/>
    </location>
</feature>
<feature type="compositionally biased region" description="Polar residues" evidence="7">
    <location>
        <begin position="66"/>
        <end position="76"/>
    </location>
</feature>
<feature type="compositionally biased region" description="Pro residues" evidence="7">
    <location>
        <begin position="513"/>
        <end position="529"/>
    </location>
</feature>
<feature type="compositionally biased region" description="Low complexity" evidence="7">
    <location>
        <begin position="666"/>
        <end position="678"/>
    </location>
</feature>
<feature type="compositionally biased region" description="Basic and acidic residues" evidence="7">
    <location>
        <begin position="711"/>
        <end position="722"/>
    </location>
</feature>
<feature type="compositionally biased region" description="Gly residues" evidence="7">
    <location>
        <begin position="783"/>
        <end position="795"/>
    </location>
</feature>
<feature type="compositionally biased region" description="Low complexity" evidence="7">
    <location>
        <begin position="811"/>
        <end position="823"/>
    </location>
</feature>
<feature type="compositionally biased region" description="Low complexity" evidence="7">
    <location>
        <begin position="833"/>
        <end position="846"/>
    </location>
</feature>
<feature type="compositionally biased region" description="Basic and acidic residues" evidence="7">
    <location>
        <begin position="847"/>
        <end position="868"/>
    </location>
</feature>
<feature type="compositionally biased region" description="Basic and acidic residues" evidence="7">
    <location>
        <begin position="899"/>
        <end position="920"/>
    </location>
</feature>
<feature type="compositionally biased region" description="Polar residues" evidence="7">
    <location>
        <begin position="1075"/>
        <end position="1085"/>
    </location>
</feature>
<feature type="compositionally biased region" description="Basic and acidic residues" evidence="7">
    <location>
        <begin position="1119"/>
        <end position="1130"/>
    </location>
</feature>
<feature type="compositionally biased region" description="Low complexity" evidence="7">
    <location>
        <begin position="1131"/>
        <end position="1151"/>
    </location>
</feature>
<feature type="compositionally biased region" description="Pro residues" evidence="7">
    <location>
        <begin position="1202"/>
        <end position="1212"/>
    </location>
</feature>
<feature type="compositionally biased region" description="Low complexity" evidence="7">
    <location>
        <begin position="1291"/>
        <end position="1305"/>
    </location>
</feature>
<feature type="compositionally biased region" description="Polar residues" evidence="7">
    <location>
        <begin position="1307"/>
        <end position="1317"/>
    </location>
</feature>
<feature type="compositionally biased region" description="Low complexity" evidence="7">
    <location>
        <begin position="1352"/>
        <end position="1363"/>
    </location>
</feature>
<feature type="compositionally biased region" description="Low complexity" evidence="7">
    <location>
        <begin position="1385"/>
        <end position="1399"/>
    </location>
</feature>
<feature type="modified residue" description="Phosphoserine" evidence="2">
    <location>
        <position position="457"/>
    </location>
</feature>
<feature type="modified residue" description="Phosphothreonine" evidence="2">
    <location>
        <position position="486"/>
    </location>
</feature>
<feature type="modified residue" description="Phosphoserine" evidence="2">
    <location>
        <position position="586"/>
    </location>
</feature>
<feature type="modified residue" description="Phosphoserine" evidence="2">
    <location>
        <position position="724"/>
    </location>
</feature>
<feature type="modified residue" description="Phosphothreonine" evidence="2">
    <location>
        <position position="903"/>
    </location>
</feature>
<feature type="modified residue" description="Phosphoserine" evidence="2">
    <location>
        <position position="1334"/>
    </location>
</feature>
<feature type="modified residue" description="Phosphoserine" evidence="2">
    <location>
        <position position="1338"/>
    </location>
</feature>
<feature type="glycosylation site" description="O-linked (GlcNAc) threonine" evidence="1">
    <location>
        <position position="1292"/>
    </location>
</feature>
<feature type="splice variant" id="VSP_006081" description="In isoform 4, isoform 5 and isoform 6." evidence="21 24">
    <location>
        <begin position="1"/>
        <end position="211"/>
    </location>
</feature>
<feature type="splice variant" id="VSP_020049" description="In isoform 7." evidence="23">
    <original>MKSLLNAFTKKE</original>
    <variation>MPRSPTSSEDEMAQSFSDYSVGSESDSSKEETIYDTIRATTEKPGGVKMEDLQGNTLVIRVVIQDLQQTKCIRFNPDATVWVAKQRILCTLNQGLKDVLNYGLFQPASNGRDGKFLDEERLLREYPQPMGQGVPSLEFRYKKRVYKQSNLDEKQLARLHTKTNLKKFMDHTQHRSVEKLVKLLDRGLDPNFHDLETGETPLTLAAQLDGSMEVIKALRNGGAHLDFRSRDGMTALHKAARMRNQVALKTLLELGASPDYKDSYGLTPLYHTAIVGGDPYCCELLLHEHASVCCKDENGWHEIHQACRYGHVQHLEHLLFYGADMSAQNASGNTALHICALYNQDSCARVLLFRGGDKELKNYNSQTPFQVAIIAGNFELAEYIKNHKETDI</variation>
    <location>
        <begin position="1"/>
        <end position="12"/>
    </location>
</feature>
<feature type="splice variant" id="VSP_006082" description="In isoform 4, isoform 5 and isoform 6." evidence="21 24">
    <original>SQAETRADRSKKLFRHYTVGSYDSFDAA</original>
    <variation>MMSVPGGGAATVMMTGYNNGRYPRNSLY</variation>
    <location>
        <begin position="212"/>
        <end position="239"/>
    </location>
</feature>
<feature type="splice variant" id="VSP_020050" description="In isoform 7." evidence="23">
    <location>
        <begin position="382"/>
        <end position="395"/>
    </location>
</feature>
<feature type="splice variant" id="VSP_006083" description="In isoform 2, isoform 3, isoform 4, isoform 5 and isoform 6." evidence="21 22 24">
    <location>
        <begin position="382"/>
        <end position="385"/>
    </location>
</feature>
<feature type="splice variant" id="VSP_006084" description="In isoform 3 and isoform 5." evidence="21 22 24">
    <location>
        <begin position="388"/>
        <end position="394"/>
    </location>
</feature>
<feature type="splice variant" id="VSP_006086" description="In isoform 3." evidence="22">
    <location>
        <begin position="468"/>
        <end position="483"/>
    </location>
</feature>
<feature type="splice variant" id="VSP_006085" description="In isoform 6." evidence="21">
    <location>
        <begin position="468"/>
        <end position="476"/>
    </location>
</feature>
<feature type="sequence conflict" description="In Ref. 4." evidence="25" ref="4">
    <original>PRVLLRS</original>
    <variation>QKNLGAA</variation>
    <location>
        <begin position="35"/>
        <end position="41"/>
    </location>
</feature>
<feature type="sequence conflict" description="In Ref. 3; AAF02497." evidence="25" ref="3">
    <original>L</original>
    <variation>F</variation>
    <location>
        <position position="152"/>
    </location>
</feature>
<feature type="sequence conflict" description="In Ref. 1; AAC62226." evidence="25" ref="1">
    <original>L</original>
    <variation>V</variation>
    <location>
        <position position="369"/>
    </location>
</feature>
<feature type="strand" evidence="27">
    <location>
        <begin position="151"/>
        <end position="155"/>
    </location>
</feature>
<feature type="strand" evidence="27">
    <location>
        <begin position="173"/>
        <end position="180"/>
    </location>
</feature>
<feature type="strand" evidence="27">
    <location>
        <begin position="182"/>
        <end position="190"/>
    </location>
</feature>
<feature type="strand" evidence="27">
    <location>
        <begin position="193"/>
        <end position="198"/>
    </location>
</feature>
<feature type="helix" evidence="27">
    <location>
        <begin position="199"/>
        <end position="201"/>
    </location>
</feature>
<feature type="strand" evidence="27">
    <location>
        <begin position="202"/>
        <end position="204"/>
    </location>
</feature>
<feature type="modified residue" description="Phosphoserine" evidence="26">
    <location sequence="Q9QX74-2">
        <position position="373"/>
    </location>
</feature>
<feature type="modified residue" description="Phosphoserine" evidence="26">
    <location sequence="Q9QX74-3">
        <position position="373"/>
    </location>
</feature>
<feature type="modified residue" description="Phosphoserine" evidence="26">
    <location sequence="Q9QX74-4">
        <position position="162"/>
    </location>
</feature>
<feature type="modified residue" description="Phosphoserine" evidence="26">
    <location sequence="Q9QX74-5">
        <position position="162"/>
    </location>
</feature>
<feature type="modified residue" description="Phosphoserine" evidence="26">
    <location sequence="Q9QX74-6">
        <position position="162"/>
    </location>
</feature>
<dbReference type="EMBL" id="AF060116">
    <property type="protein sequence ID" value="AAC62226.1"/>
    <property type="molecule type" value="mRNA"/>
</dbReference>
<dbReference type="EMBL" id="AJ249562">
    <property type="protein sequence ID" value="CAB56522.1"/>
    <property type="molecule type" value="mRNA"/>
</dbReference>
<dbReference type="EMBL" id="AJ131899">
    <property type="protein sequence ID" value="CAB44314.1"/>
    <property type="molecule type" value="mRNA"/>
</dbReference>
<dbReference type="EMBL" id="AJ131899">
    <property type="protein sequence ID" value="CAB44312.1"/>
    <property type="molecule type" value="mRNA"/>
</dbReference>
<dbReference type="EMBL" id="AJ131899">
    <property type="protein sequence ID" value="CAB44313.1"/>
    <property type="molecule type" value="mRNA"/>
</dbReference>
<dbReference type="EMBL" id="AY298755">
    <property type="protein sequence ID" value="AAP85236.1"/>
    <property type="molecule type" value="mRNA"/>
</dbReference>
<dbReference type="EMBL" id="AF141903">
    <property type="protein sequence ID" value="AAF02497.1"/>
    <property type="molecule type" value="mRNA"/>
</dbReference>
<dbReference type="EMBL" id="AF159048">
    <property type="protein sequence ID" value="AAD42977.1"/>
    <property type="status" value="ALT_FRAME"/>
    <property type="molecule type" value="mRNA"/>
</dbReference>
<dbReference type="PIR" id="T14272">
    <property type="entry name" value="T14272"/>
</dbReference>
<dbReference type="RefSeq" id="NP_001004133.1">
    <property type="nucleotide sequence ID" value="NM_001004133.1"/>
</dbReference>
<dbReference type="RefSeq" id="NP_597684.1">
    <molecule id="Q9QX74-4"/>
    <property type="nucleotide sequence ID" value="NM_133440.1"/>
</dbReference>
<dbReference type="RefSeq" id="NP_597685.1">
    <molecule id="Q9QX74-2"/>
    <property type="nucleotide sequence ID" value="NM_133441.2"/>
</dbReference>
<dbReference type="RefSeq" id="NP_958738.1">
    <molecule id="Q9QX74-7"/>
    <property type="nucleotide sequence ID" value="NM_201350.1"/>
</dbReference>
<dbReference type="RefSeq" id="XP_017444213.1">
    <property type="nucleotide sequence ID" value="XM_017588724.1"/>
</dbReference>
<dbReference type="RefSeq" id="XP_038943324.1">
    <molecule id="Q9QX74-6"/>
    <property type="nucleotide sequence ID" value="XM_039087396.2"/>
</dbReference>
<dbReference type="RefSeq" id="XP_063130630.1">
    <molecule id="Q9QX74-7"/>
    <property type="nucleotide sequence ID" value="XM_063274560.1"/>
</dbReference>
<dbReference type="RefSeq" id="XP_063130767.1">
    <molecule id="Q9QX74-1"/>
    <property type="nucleotide sequence ID" value="XM_063274697.1"/>
</dbReference>
<dbReference type="PDB" id="6CPJ">
    <property type="method" value="NMR"/>
    <property type="chains" value="A=148-206"/>
</dbReference>
<dbReference type="PDBsum" id="6CPJ"/>
<dbReference type="SMR" id="Q9QX74"/>
<dbReference type="BioGRID" id="251104">
    <property type="interactions" value="4"/>
</dbReference>
<dbReference type="CORUM" id="Q9QX74"/>
<dbReference type="FunCoup" id="Q9QX74">
    <property type="interactions" value="985"/>
</dbReference>
<dbReference type="IntAct" id="Q9QX74">
    <property type="interactions" value="20"/>
</dbReference>
<dbReference type="MINT" id="Q9QX74"/>
<dbReference type="STRING" id="10116.ENSRNOP00000065891"/>
<dbReference type="GlyCosmos" id="Q9QX74">
    <property type="glycosylation" value="1 site, No reported glycans"/>
</dbReference>
<dbReference type="GlyGen" id="Q9QX74">
    <property type="glycosylation" value="5 sites, 1 O-linked glycan (1 site)"/>
</dbReference>
<dbReference type="iPTMnet" id="Q9QX74"/>
<dbReference type="PhosphoSitePlus" id="Q9QX74"/>
<dbReference type="jPOST" id="Q9QX74"/>
<dbReference type="PaxDb" id="10116-ENSRNOP00000067841"/>
<dbReference type="ABCD" id="Q9QX74">
    <property type="antibodies" value="2 sequenced antibodies"/>
</dbReference>
<dbReference type="Ensembl" id="ENSRNOT00000075078.4">
    <molecule id="Q9QX74-7"/>
    <property type="protein sequence ID" value="ENSRNOP00000065891.2"/>
    <property type="gene ID" value="ENSRNOG00000050206.5"/>
</dbReference>
<dbReference type="Ensembl" id="ENSRNOT00000092386.2">
    <molecule id="Q9QX74-5"/>
    <property type="protein sequence ID" value="ENSRNOP00000075919.2"/>
    <property type="gene ID" value="ENSRNOG00000050206.5"/>
</dbReference>
<dbReference type="Ensembl" id="ENSRNOT00000092516.2">
    <molecule id="Q9QX74-2"/>
    <property type="protein sequence ID" value="ENSRNOP00000075839.1"/>
    <property type="gene ID" value="ENSRNOG00000050206.5"/>
</dbReference>
<dbReference type="GeneID" id="171093"/>
<dbReference type="KEGG" id="rno:171093"/>
<dbReference type="UCSC" id="RGD:628772">
    <molecule id="Q9QX74-1"/>
    <property type="organism name" value="rat"/>
</dbReference>
<dbReference type="AGR" id="RGD:628772"/>
<dbReference type="CTD" id="22941"/>
<dbReference type="RGD" id="628772">
    <property type="gene designation" value="Shank2"/>
</dbReference>
<dbReference type="VEuPathDB" id="HostDB:ENSRNOG00000050206"/>
<dbReference type="eggNOG" id="KOG0504">
    <property type="taxonomic scope" value="Eukaryota"/>
</dbReference>
<dbReference type="eggNOG" id="KOG4375">
    <property type="taxonomic scope" value="Eukaryota"/>
</dbReference>
<dbReference type="GeneTree" id="ENSGT00940000153561"/>
<dbReference type="InParanoid" id="Q9QX74"/>
<dbReference type="OMA" id="RQKSIAC"/>
<dbReference type="PRO" id="PR:Q9QX74"/>
<dbReference type="Proteomes" id="UP000002494">
    <property type="component" value="Chromosome 1"/>
</dbReference>
<dbReference type="Bgee" id="ENSRNOG00000050206">
    <property type="expression patterns" value="Expressed in frontal cortex and 13 other cell types or tissues"/>
</dbReference>
<dbReference type="ExpressionAtlas" id="Q9QX74">
    <property type="expression patterns" value="baseline and differential"/>
</dbReference>
<dbReference type="GO" id="GO:0016324">
    <property type="term" value="C:apical plasma membrane"/>
    <property type="evidence" value="ECO:0000314"/>
    <property type="project" value="UniProtKB"/>
</dbReference>
<dbReference type="GO" id="GO:0032279">
    <property type="term" value="C:asymmetric synapse"/>
    <property type="evidence" value="ECO:0000314"/>
    <property type="project" value="SynGO"/>
</dbReference>
<dbReference type="GO" id="GO:0031526">
    <property type="term" value="C:brush border membrane"/>
    <property type="evidence" value="ECO:0000314"/>
    <property type="project" value="RGD"/>
</dbReference>
<dbReference type="GO" id="GO:0060170">
    <property type="term" value="C:ciliary membrane"/>
    <property type="evidence" value="ECO:0000314"/>
    <property type="project" value="BHF-UCL"/>
</dbReference>
<dbReference type="GO" id="GO:0043197">
    <property type="term" value="C:dendritic spine"/>
    <property type="evidence" value="ECO:0000250"/>
    <property type="project" value="BHF-UCL"/>
</dbReference>
<dbReference type="GO" id="GO:0098978">
    <property type="term" value="C:glutamatergic synapse"/>
    <property type="evidence" value="ECO:0000314"/>
    <property type="project" value="SynGO"/>
</dbReference>
<dbReference type="GO" id="GO:0030426">
    <property type="term" value="C:growth cone"/>
    <property type="evidence" value="ECO:0000314"/>
    <property type="project" value="RGD"/>
</dbReference>
<dbReference type="GO" id="GO:0098686">
    <property type="term" value="C:hippocampal mossy fiber to CA3 synapse"/>
    <property type="evidence" value="ECO:0000314"/>
    <property type="project" value="SynGO"/>
</dbReference>
<dbReference type="GO" id="GO:0005883">
    <property type="term" value="C:neurofilament"/>
    <property type="evidence" value="ECO:0000266"/>
    <property type="project" value="RGD"/>
</dbReference>
<dbReference type="GO" id="GO:0043005">
    <property type="term" value="C:neuron projection"/>
    <property type="evidence" value="ECO:0000250"/>
    <property type="project" value="BHF-UCL"/>
</dbReference>
<dbReference type="GO" id="GO:0043025">
    <property type="term" value="C:neuronal cell body"/>
    <property type="evidence" value="ECO:0000314"/>
    <property type="project" value="RGD"/>
</dbReference>
<dbReference type="GO" id="GO:0001917">
    <property type="term" value="C:photoreceptor inner segment"/>
    <property type="evidence" value="ECO:0000250"/>
    <property type="project" value="BHF-UCL"/>
</dbReference>
<dbReference type="GO" id="GO:0001750">
    <property type="term" value="C:photoreceptor outer segment"/>
    <property type="evidence" value="ECO:0000250"/>
    <property type="project" value="BHF-UCL"/>
</dbReference>
<dbReference type="GO" id="GO:0005886">
    <property type="term" value="C:plasma membrane"/>
    <property type="evidence" value="ECO:0000250"/>
    <property type="project" value="BHF-UCL"/>
</dbReference>
<dbReference type="GO" id="GO:0014069">
    <property type="term" value="C:postsynaptic density"/>
    <property type="evidence" value="ECO:0000314"/>
    <property type="project" value="SynGO"/>
</dbReference>
<dbReference type="GO" id="GO:0045211">
    <property type="term" value="C:postsynaptic membrane"/>
    <property type="evidence" value="ECO:0000266"/>
    <property type="project" value="RGD"/>
</dbReference>
<dbReference type="GO" id="GO:0048786">
    <property type="term" value="C:presynaptic active zone"/>
    <property type="evidence" value="ECO:0000314"/>
    <property type="project" value="MGI"/>
</dbReference>
<dbReference type="GO" id="GO:0035255">
    <property type="term" value="F:ionotropic glutamate receptor binding"/>
    <property type="evidence" value="ECO:0000250"/>
    <property type="project" value="BHF-UCL"/>
</dbReference>
<dbReference type="GO" id="GO:0017124">
    <property type="term" value="F:SH3 domain binding"/>
    <property type="evidence" value="ECO:0000353"/>
    <property type="project" value="RGD"/>
</dbReference>
<dbReference type="GO" id="GO:0098919">
    <property type="term" value="F:structural constituent of postsynaptic density"/>
    <property type="evidence" value="ECO:0000314"/>
    <property type="project" value="SynGO"/>
</dbReference>
<dbReference type="GO" id="GO:0030534">
    <property type="term" value="P:adult behavior"/>
    <property type="evidence" value="ECO:0000250"/>
    <property type="project" value="BHF-UCL"/>
</dbReference>
<dbReference type="GO" id="GO:0008344">
    <property type="term" value="P:adult locomotory behavior"/>
    <property type="evidence" value="ECO:0000315"/>
    <property type="project" value="RGD"/>
</dbReference>
<dbReference type="GO" id="GO:0008306">
    <property type="term" value="P:associative learning"/>
    <property type="evidence" value="ECO:0000315"/>
    <property type="project" value="RGD"/>
</dbReference>
<dbReference type="GO" id="GO:0035640">
    <property type="term" value="P:exploration behavior"/>
    <property type="evidence" value="ECO:0000250"/>
    <property type="project" value="BHF-UCL"/>
</dbReference>
<dbReference type="GO" id="GO:0007612">
    <property type="term" value="P:learning"/>
    <property type="evidence" value="ECO:0000250"/>
    <property type="project" value="BHF-UCL"/>
</dbReference>
<dbReference type="GO" id="GO:0060292">
    <property type="term" value="P:long-term synaptic depression"/>
    <property type="evidence" value="ECO:0000250"/>
    <property type="project" value="BHF-UCL"/>
</dbReference>
<dbReference type="GO" id="GO:0060291">
    <property type="term" value="P:long-term synaptic potentiation"/>
    <property type="evidence" value="ECO:0000250"/>
    <property type="project" value="BHF-UCL"/>
</dbReference>
<dbReference type="GO" id="GO:0007613">
    <property type="term" value="P:memory"/>
    <property type="evidence" value="ECO:0000250"/>
    <property type="project" value="BHF-UCL"/>
</dbReference>
<dbReference type="GO" id="GO:0035331">
    <property type="term" value="P:negative regulation of hippo signaling"/>
    <property type="evidence" value="ECO:0000266"/>
    <property type="project" value="RGD"/>
</dbReference>
<dbReference type="GO" id="GO:0008284">
    <property type="term" value="P:positive regulation of cell population proliferation"/>
    <property type="evidence" value="ECO:0000266"/>
    <property type="project" value="RGD"/>
</dbReference>
<dbReference type="GO" id="GO:0051968">
    <property type="term" value="P:positive regulation of synaptic transmission, glutamatergic"/>
    <property type="evidence" value="ECO:0000266"/>
    <property type="project" value="RGD"/>
</dbReference>
<dbReference type="GO" id="GO:0099175">
    <property type="term" value="P:regulation of postsynapse organization"/>
    <property type="evidence" value="ECO:0000314"/>
    <property type="project" value="SynGO"/>
</dbReference>
<dbReference type="GO" id="GO:0007584">
    <property type="term" value="P:response to nutrient"/>
    <property type="evidence" value="ECO:0000270"/>
    <property type="project" value="RGD"/>
</dbReference>
<dbReference type="GO" id="GO:0009410">
    <property type="term" value="P:response to xenobiotic stimulus"/>
    <property type="evidence" value="ECO:0000315"/>
    <property type="project" value="RGD"/>
</dbReference>
<dbReference type="GO" id="GO:0035176">
    <property type="term" value="P:social behavior"/>
    <property type="evidence" value="ECO:0000315"/>
    <property type="project" value="RGD"/>
</dbReference>
<dbReference type="GO" id="GO:0007416">
    <property type="term" value="P:synapse assembly"/>
    <property type="evidence" value="ECO:0000250"/>
    <property type="project" value="BHF-UCL"/>
</dbReference>
<dbReference type="GO" id="GO:0071625">
    <property type="term" value="P:vocalization behavior"/>
    <property type="evidence" value="ECO:0000250"/>
    <property type="project" value="BHF-UCL"/>
</dbReference>
<dbReference type="CDD" id="cd06746">
    <property type="entry name" value="PDZ_SHANK1_3-like"/>
    <property type="match status" value="1"/>
</dbReference>
<dbReference type="CDD" id="cd09506">
    <property type="entry name" value="SAM_Shank1_2_3"/>
    <property type="match status" value="1"/>
</dbReference>
<dbReference type="CDD" id="cd11983">
    <property type="entry name" value="SH3_Shank2"/>
    <property type="match status" value="1"/>
</dbReference>
<dbReference type="FunFam" id="1.10.150.50:FF:000006">
    <property type="entry name" value="SH3 and multiple ankyrin repeat domains protein 2"/>
    <property type="match status" value="1"/>
</dbReference>
<dbReference type="FunFam" id="2.30.30.40:FF:000025">
    <property type="entry name" value="SH3 and multiple ankyrin repeat domains protein 2"/>
    <property type="match status" value="1"/>
</dbReference>
<dbReference type="FunFam" id="2.30.42.10:FF:000018">
    <property type="entry name" value="SH3 and multiple ankyrin repeat domains protein 2"/>
    <property type="match status" value="1"/>
</dbReference>
<dbReference type="Gene3D" id="2.30.42.10">
    <property type="match status" value="1"/>
</dbReference>
<dbReference type="Gene3D" id="2.30.30.40">
    <property type="entry name" value="SH3 Domains"/>
    <property type="match status" value="1"/>
</dbReference>
<dbReference type="Gene3D" id="1.10.150.50">
    <property type="entry name" value="Transcription Factor, Ets-1"/>
    <property type="match status" value="1"/>
</dbReference>
<dbReference type="InterPro" id="IPR001478">
    <property type="entry name" value="PDZ"/>
</dbReference>
<dbReference type="InterPro" id="IPR041489">
    <property type="entry name" value="PDZ_6"/>
</dbReference>
<dbReference type="InterPro" id="IPR036034">
    <property type="entry name" value="PDZ_sf"/>
</dbReference>
<dbReference type="InterPro" id="IPR001660">
    <property type="entry name" value="SAM"/>
</dbReference>
<dbReference type="InterPro" id="IPR013761">
    <property type="entry name" value="SAM/pointed_sf"/>
</dbReference>
<dbReference type="InterPro" id="IPR036028">
    <property type="entry name" value="SH3-like_dom_sf"/>
</dbReference>
<dbReference type="InterPro" id="IPR001452">
    <property type="entry name" value="SH3_domain"/>
</dbReference>
<dbReference type="InterPro" id="IPR051569">
    <property type="entry name" value="SHANK"/>
</dbReference>
<dbReference type="PANTHER" id="PTHR24135">
    <property type="entry name" value="SH3 AND MULTIPLE ANKYRIN REPEAT DOMAINS PROTEIN"/>
    <property type="match status" value="1"/>
</dbReference>
<dbReference type="PANTHER" id="PTHR24135:SF17">
    <property type="entry name" value="SH3 AND MULTIPLE ANKYRIN REPEAT DOMAINS PROTEIN 2"/>
    <property type="match status" value="1"/>
</dbReference>
<dbReference type="Pfam" id="PF17820">
    <property type="entry name" value="PDZ_6"/>
    <property type="match status" value="1"/>
</dbReference>
<dbReference type="Pfam" id="PF00536">
    <property type="entry name" value="SAM_1"/>
    <property type="match status" value="1"/>
</dbReference>
<dbReference type="Pfam" id="PF07653">
    <property type="entry name" value="SH3_2"/>
    <property type="match status" value="1"/>
</dbReference>
<dbReference type="SMART" id="SM00228">
    <property type="entry name" value="PDZ"/>
    <property type="match status" value="1"/>
</dbReference>
<dbReference type="SMART" id="SM00454">
    <property type="entry name" value="SAM"/>
    <property type="match status" value="1"/>
</dbReference>
<dbReference type="SMART" id="SM00326">
    <property type="entry name" value="SH3"/>
    <property type="match status" value="1"/>
</dbReference>
<dbReference type="SUPFAM" id="SSF50156">
    <property type="entry name" value="PDZ domain-like"/>
    <property type="match status" value="1"/>
</dbReference>
<dbReference type="SUPFAM" id="SSF47769">
    <property type="entry name" value="SAM/Pointed domain"/>
    <property type="match status" value="1"/>
</dbReference>
<dbReference type="SUPFAM" id="SSF50044">
    <property type="entry name" value="SH3-domain"/>
    <property type="match status" value="1"/>
</dbReference>
<dbReference type="PROSITE" id="PS50106">
    <property type="entry name" value="PDZ"/>
    <property type="match status" value="1"/>
</dbReference>
<dbReference type="PROSITE" id="PS50105">
    <property type="entry name" value="SAM_DOMAIN"/>
    <property type="match status" value="1"/>
</dbReference>
<dbReference type="PROSITE" id="PS50002">
    <property type="entry name" value="SH3"/>
    <property type="match status" value="1"/>
</dbReference>
<gene>
    <name type="primary">Shank2</name>
    <name type="synonym">Cortbp1</name>
</gene>
<reference key="1">
    <citation type="journal article" date="1998" name="Mol. Cell. Biol.">
        <title>Identification of a novel cortactin SH3 domain-binding protein and its localization to growth cones of cultured neurons.</title>
        <authorList>
            <person name="Du Y."/>
            <person name="Weed S.A."/>
            <person name="Xiong W.-C."/>
            <person name="Marshall T.D."/>
            <person name="Parsons J.T."/>
        </authorList>
    </citation>
    <scope>NUCLEOTIDE SEQUENCE [MRNA] (ISOFORM 5)</scope>
    <scope>INTERACTION WITH CTTN</scope>
    <source>
        <tissue>Hippocampus</tissue>
    </source>
</reference>
<reference key="2">
    <citation type="journal article" date="1999" name="J. Neurosci.">
        <title>Proline-rich synapse-associated protein-1/cortactin binding protein 1 (ProSAP1/CortBP1) is a PDZ-domain protein highly enriched in the postsynaptic density.</title>
        <authorList>
            <person name="Boeckers T.M."/>
            <person name="Kreutz M.R."/>
            <person name="Winter C."/>
            <person name="Zuschratter W."/>
            <person name="Smalla K.-H."/>
            <person name="Sanmarti-Vila L."/>
            <person name="Wex H."/>
            <person name="Langnaese K."/>
            <person name="Bockmann J."/>
            <person name="Garner C.C."/>
            <person name="Gundelfinger E.D."/>
        </authorList>
    </citation>
    <scope>NUCLEOTIDE SEQUENCE [MRNA] (ISOFORMS 2; 4; 5 AND 6)</scope>
    <scope>TISSUE SPECIFICITY</scope>
    <scope>DEVELOPMENTAL STAGE</scope>
    <source>
        <tissue>Brain</tissue>
        <tissue>Hippocampus</tissue>
    </source>
</reference>
<reference key="3">
    <citation type="journal article" date="2004" name="Biochem. J.">
        <title>Characterization of an ankyrin repeat-containing Shank2 isoform (Shank2E) in liver epithelial cells.</title>
        <authorList>
            <person name="McWilliams R.R."/>
            <person name="Gidey E."/>
            <person name="Fouassier L."/>
            <person name="Weed S.A."/>
            <person name="Doctor R.B."/>
        </authorList>
    </citation>
    <scope>NUCLEOTIDE SEQUENCE [MRNA] (ISOFORM 7)</scope>
    <scope>TISSUE SPECIFICITY</scope>
    <source>
        <tissue>Hepatocyte</tissue>
    </source>
</reference>
<reference key="4">
    <citation type="journal article" date="1999" name="J. Biol. Chem.">
        <title>Characterization of the shank family of synaptic proteins. Multiple genes, alternative splicing, and differential expression in brain and development.</title>
        <authorList>
            <person name="Lim S."/>
            <person name="Naisbitt S."/>
            <person name="Yoon J."/>
            <person name="Hwang J.-I."/>
            <person name="Suh P.-G."/>
            <person name="Sheng M."/>
            <person name="Kim E."/>
        </authorList>
    </citation>
    <scope>PARTIAL NUCLEOTIDE SEQUENCE [MRNA] (ISOFORMS 1 AND 4/5/6)</scope>
    <scope>TISSUE SPECIFICITY</scope>
    <scope>FUNCTION</scope>
    <source>
        <tissue>Brain</tissue>
    </source>
</reference>
<reference key="5">
    <citation type="journal article" date="2000" name="J. Biol. Chem.">
        <title>The G protein-coupled receptor CL1 interacts directly with proteins of the Shank family.</title>
        <authorList>
            <person name="Tobaben S."/>
            <person name="Suedhof T.C."/>
            <person name="Stahl B."/>
        </authorList>
    </citation>
    <scope>NUCLEOTIDE SEQUENCE [MRNA] OF 35-656 (ISOFORM 3)</scope>
</reference>
<reference key="6">
    <citation type="journal article" date="1999" name="Biochem. Biophys. Res. Commun.">
        <title>Proline-rich synapse-associated proteins ProSAP1 and ProSAP2 interact with synaptic proteins of the SAPAP/GKAP family.</title>
        <authorList>
            <person name="Boeckers T.M."/>
            <person name="Winter C."/>
            <person name="Smalla K.-H."/>
            <person name="Kreutz M.R."/>
            <person name="Bockmann J."/>
            <person name="Seidenbecher C."/>
            <person name="Garner C.C."/>
            <person name="Gundelfinger E.D."/>
        </authorList>
    </citation>
    <scope>INTERACTION WITH DLGAP1 AND DLG4</scope>
</reference>
<reference key="7">
    <citation type="journal article" date="2000" name="J. Biol. Chem.">
        <title>The calcium-independent receptor for alpha-latrotoxin from human and rodent brains interacts with members of the ProSAP/SSTRIP/Shank family of multidomain proteins.</title>
        <authorList>
            <person name="Kreienkamp H.-J."/>
            <person name="Zitzer H."/>
            <person name="Gundelfinger E.D."/>
            <person name="Richter D."/>
            <person name="Bockers T.M."/>
        </authorList>
    </citation>
    <scope>INTERACTION WITH ALPHA-LATROTOXIN RECEPTOR 1</scope>
</reference>
<reference key="8">
    <citation type="journal article" date="2000" name="J. Cell Sci.">
        <title>The Shank family of scaffold proteins.</title>
        <authorList>
            <person name="Sheng M."/>
            <person name="Kim E."/>
        </authorList>
    </citation>
    <scope>REVIEW</scope>
</reference>
<reference key="9">
    <citation type="journal article" date="2004" name="J. Biol. Chem.">
        <title>Inhibitory regulation of cystic fibrosis transmembrane conductance regulator anion-transporting activities by Shank2.</title>
        <authorList>
            <person name="Kim J.Y."/>
            <person name="Han W."/>
            <person name="Namkung W."/>
            <person name="Lee J.H."/>
            <person name="Kim K.H."/>
            <person name="Shin H."/>
            <person name="Kim E."/>
            <person name="Lee M.G."/>
        </authorList>
    </citation>
    <scope>TISSUE SPECIFICITY</scope>
    <scope>INTERACTION WITH CFTR</scope>
</reference>
<reference key="10">
    <citation type="journal article" date="2004" name="J. Neurosci.">
        <title>Linkage of the actin cytoskeleton to the postsynaptic density via direct interactions of Abp1 with the ProSAP/Shank family.</title>
        <authorList>
            <person name="Qualmann B."/>
            <person name="Boeckers T.M."/>
            <person name="Jeromin M."/>
            <person name="Gundelfinger E.D."/>
            <person name="Kessels M.M."/>
        </authorList>
    </citation>
    <scope>INTERACTION WITH DBNL</scope>
</reference>
<reference key="11">
    <citation type="journal article" date="2005" name="J. Biol. Chem.">
        <title>The interaction of phospholipase C-beta3 with Shank2 regulates mGluR-mediated calcium signal.</title>
        <authorList>
            <person name="Hwang J.-I."/>
            <person name="Kim H.S."/>
            <person name="Lee J.R."/>
            <person name="Kim E."/>
            <person name="Ryu S.H."/>
            <person name="Suh P.-G."/>
        </authorList>
    </citation>
    <scope>INTERACTION WITH PLCB3</scope>
</reference>
<reference key="12">
    <citation type="journal article" date="2006" name="J. Biol. Chem.">
        <title>Shank2 associates with and regulates Na+/H+ exchanger 3.</title>
        <authorList>
            <person name="Han W."/>
            <person name="Kim K.H."/>
            <person name="Jo M.J."/>
            <person name="Lee J.H."/>
            <person name="Yang J."/>
            <person name="Doctor R.B."/>
            <person name="Moe O.W."/>
            <person name="Lee J."/>
            <person name="Kim E."/>
            <person name="Lee M.G."/>
        </authorList>
    </citation>
    <scope>INTERACTION WITH SLC9A3</scope>
</reference>
<reference key="13">
    <citation type="journal article" date="2006" name="Histochem. Cell Biol.">
        <title>Expression of postsynaptic density proteins of the ProSAP/Shank family in the thymus.</title>
        <authorList>
            <person name="Redecker P."/>
            <person name="Bockmann J."/>
            <person name="Boeckers T.M."/>
        </authorList>
    </citation>
    <scope>TISSUE SPECIFICITY</scope>
</reference>
<reference key="14">
    <citation type="journal article" date="2007" name="EMBO J.">
        <title>Abelson interacting protein 1 (Abi-1) is essential for dendrite morphogenesis and synapse formation.</title>
        <authorList>
            <person name="Proepper C."/>
            <person name="Johannsen S."/>
            <person name="Liebau S."/>
            <person name="Dahl J."/>
            <person name="Vaida B."/>
            <person name="Bockmann J."/>
            <person name="Kreutz M.R."/>
            <person name="Gundelfinger E.D."/>
            <person name="Boeckers T.M."/>
        </authorList>
    </citation>
    <scope>INTERACTION WITH ABI1</scope>
</reference>
<reference key="15">
    <citation type="journal article" date="2007" name="J. Biol. Chem.">
        <title>Dynamic regulation of cystic fibrosis transmembrane conductance regulator by competitive interactions of molecular adaptors.</title>
        <authorList>
            <person name="Lee J.H."/>
            <person name="Richter W."/>
            <person name="Namkung W."/>
            <person name="Kim K.H."/>
            <person name="Kim E."/>
            <person name="Conti M."/>
            <person name="Lee M.G."/>
        </authorList>
    </citation>
    <scope>INTERACTION WITH PDE4D</scope>
    <scope>SUBCELLULAR LOCATION</scope>
    <scope>TISSUE SPECIFICITY</scope>
</reference>
<reference key="16">
    <citation type="journal article" date="2012" name="Nat. Commun.">
        <title>Quantitative maps of protein phosphorylation sites across 14 different rat organs and tissues.</title>
        <authorList>
            <person name="Lundby A."/>
            <person name="Secher A."/>
            <person name="Lage K."/>
            <person name="Nordsborg N.B."/>
            <person name="Dmytriyev A."/>
            <person name="Lundby C."/>
            <person name="Olsen J.V."/>
        </authorList>
    </citation>
    <scope>PHOSPHORYLATION [LARGE SCALE ANALYSIS] AT SER-373 (ISOFORMS 2 AND 3)</scope>
    <scope>PHOSPHORYLATION [LARGE SCALE ANALYSIS] AT SER-162 (ISOFORMS 4; 5 AND 6)</scope>
    <scope>IDENTIFICATION BY MASS SPECTROMETRY [LARGE SCALE ANALYSIS]</scope>
</reference>
<protein>
    <recommendedName>
        <fullName>SH3 and multiple ankyrin repeat domains protein 2</fullName>
        <shortName>Shank2</shortName>
    </recommendedName>
    <alternativeName>
        <fullName>Cortactin-binding protein 1</fullName>
        <shortName>CortBP1</shortName>
    </alternativeName>
    <alternativeName>
        <fullName>GKAP/SAPAP-interacting protein</fullName>
    </alternativeName>
    <alternativeName>
        <fullName>Proline-rich synapse-associated protein 1</fullName>
        <shortName>ProSAP1</shortName>
    </alternativeName>
    <alternativeName>
        <fullName>SPANK-3</fullName>
    </alternativeName>
</protein>
<keyword id="KW-0002">3D-structure</keyword>
<keyword id="KW-0025">Alternative splicing</keyword>
<keyword id="KW-1003">Cell membrane</keyword>
<keyword id="KW-0966">Cell projection</keyword>
<keyword id="KW-0963">Cytoplasm</keyword>
<keyword id="KW-0325">Glycoprotein</keyword>
<keyword id="KW-0472">Membrane</keyword>
<keyword id="KW-0597">Phosphoprotein</keyword>
<keyword id="KW-1185">Reference proteome</keyword>
<keyword id="KW-0728">SH3 domain</keyword>
<keyword id="KW-0729">SH3-binding</keyword>
<keyword id="KW-0770">Synapse</keyword>
<comment type="function">
    <text evidence="9">Seems to be an adapter protein in the postsynaptic density (PSD) of excitatory synapses that interconnects receptors of the postsynaptic membrane including NMDA-type and metabotropic glutamate receptors, and the actin-based cytoskeleton. May play a role in the structural and functional organization of the dendritic spine and synaptic junction.</text>
</comment>
<comment type="subunit">
    <text evidence="10 11 12 14 15 16 18 19 20">Is part of a complex with DLG4/PSD-95 and DLGAP1/GKAP. Interacts with CTTN/cortactin SH3 domain, DLGAP1/GKAP and alpha-latrotoxin receptor 1. Interacts with DNM2, DBNL, GRID2, BAIAP2, SLC9A3, PLCB3 and CFTR. Interacts with ABI1 (via SH3 domain). Interacts (via proline-rich region) with PDE4D isoform 5 (via N-terminal region). Interacts with PDE4D isoform 33, isoform 4, isoform 7, isoform 8 and isoform 9 but not isoform 32 and isoform 6. Interacts weakly with PDE4D isoform 31. Interacts with ABI1.</text>
</comment>
<comment type="interaction">
    <interactant intactId="EBI-397902">
        <id>Q9QX74</id>
    </interactant>
    <interactant intactId="EBI-9032440">
        <id>P14270-8</id>
        <label>Pde4d</label>
    </interactant>
    <organismsDiffer>false</organismsDiffer>
    <experiments>4</experiments>
</comment>
<comment type="interaction">
    <interactant intactId="EBI-397902">
        <id>Q9QX74</id>
    </interactant>
    <interactant intactId="EBI-36481538">
        <id>Q99JE6</id>
        <label>Plcb3</label>
    </interactant>
    <organismsDiffer>false</organismsDiffer>
    <experiments>4</experiments>
</comment>
<comment type="interaction">
    <interactant intactId="EBI-397902">
        <id>Q9QX74</id>
    </interactant>
    <interactant intactId="EBI-961694">
        <id>P26433</id>
        <label>Slc9a3</label>
    </interactant>
    <organismsDiffer>false</organismsDiffer>
    <experiments>5</experiments>
</comment>
<comment type="interaction">
    <interactant intactId="EBI-397902">
        <id>Q9QX74</id>
    </interactant>
    <interactant intactId="EBI-8620514">
        <id>Q9ES28-2</id>
        <label>Arhgef7</label>
    </interactant>
    <organismsDiffer>true</organismsDiffer>
    <experiments>4</experiments>
</comment>
<comment type="interaction">
    <interactant intactId="EBI-397902">
        <id>Q9QX74</id>
    </interactant>
    <interactant intactId="EBI-349854">
        <id>P13569</id>
        <label>CFTR</label>
    </interactant>
    <organismsDiffer>true</organismsDiffer>
    <experiments>3</experiments>
</comment>
<comment type="interaction">
    <interactant intactId="EBI-36481413">
        <id>Q9QX74-4</id>
    </interactant>
    <interactant intactId="EBI-642580">
        <id>Q9ES28</id>
        <label>Arhgef7</label>
    </interactant>
    <organismsDiffer>true</organismsDiffer>
    <experiments>3</experiments>
</comment>
<comment type="interaction">
    <interactant intactId="EBI-20939146">
        <id>Q9QX74-7</id>
    </interactant>
    <interactant intactId="EBI-8072674">
        <id>P27732</id>
        <label>Cacna1d</label>
    </interactant>
    <organismsDiffer>false</organismsDiffer>
    <experiments>2</experiments>
</comment>
<comment type="subcellular location">
    <subcellularLocation>
        <location evidence="18">Apical cell membrane</location>
    </subcellularLocation>
    <subcellularLocation>
        <location evidence="18">Cytoplasm</location>
    </subcellularLocation>
    <subcellularLocation>
        <location evidence="18">Synapse</location>
    </subcellularLocation>
    <subcellularLocation>
        <location evidence="18">Postsynaptic density</location>
    </subcellularLocation>
    <subcellularLocation>
        <location evidence="18">Cell projection</location>
        <location evidence="18">Growth cone</location>
    </subcellularLocation>
    <subcellularLocation>
        <location evidence="1">Cell projection</location>
        <location evidence="1">Dendritic spine</location>
    </subcellularLocation>
    <text evidence="1">Colocalizes with cortactin in growth cones in differentiating hippocampal neurons. Present in the dendritic spines of cerebellar Purkinje cells (By similarity). Colocalizes with cortactin in growth cones in differentiating hippocampal neurons. Colocalized with PDE4D to the apical membrane of colonic crypt cells.</text>
</comment>
<comment type="alternative products">
    <event type="alternative splicing"/>
    <isoform>
        <id>Q9QX74-1</id>
        <name>1</name>
        <sequence type="displayed"/>
    </isoform>
    <isoform>
        <id>Q9QX74-2</id>
        <name>2</name>
        <sequence type="described" ref="VSP_006083"/>
    </isoform>
    <isoform>
        <id>Q9QX74-3</id>
        <name>3</name>
        <sequence type="described" ref="VSP_006083 VSP_006084 VSP_006086"/>
    </isoform>
    <isoform>
        <id>Q9QX74-4</id>
        <name>4</name>
        <sequence type="described" ref="VSP_006081 VSP_006082 VSP_006083"/>
    </isoform>
    <isoform>
        <id>Q9QX74-5</id>
        <name>5</name>
        <sequence type="described" ref="VSP_006081 VSP_006082 VSP_006083 VSP_006084"/>
    </isoform>
    <isoform>
        <id>Q9QX74-6</id>
        <name>6</name>
        <sequence type="described" ref="VSP_006081 VSP_006082 VSP_006083 VSP_006085"/>
    </isoform>
    <isoform>
        <id>Q9QX74-7</id>
        <name>7</name>
        <name>E</name>
        <sequence type="described" ref="VSP_020049 VSP_020050"/>
    </isoform>
    <text>So far detected are complete isoforms 2 to 5. Experimental confirmation may be lacking for some isoforms.</text>
</comment>
<comment type="tissue specificity">
    <text evidence="8 9 12 13 17 18">Expressed in epithelial cells (at protein level). All isoforms except isoform 7 are expressed predominantly in brain, with highest levels in olfactory bulb, cerebral cortex, cerebellum, central gray matter and hippocampus. Moderate levels of expression are seen in the caudate putamen, thalamic nuclei and brain stem. In cerebellum primarily expressed in Purkinje cells. Isoform 7 is not expressed in brain but expressed in liver, cholangiocytes and thymus. Isoform 7 is present in pancreas, colonic mucosa and thymocytes (at protein level).</text>
</comment>
<comment type="developmental stage">
    <text evidence="8">Expressed during early postnatal brain development, especially in the caudate putamen and thalamic nuclei. Expression in the cerebral cortex, the hippocampus and the cerebellum is moderate to high at P5 and shows a stable expression throughout development. Isoforms 1, 2, 4 and 6 are predominantly expressed in cerebellum up to the age of approximately 3 weeks. Isoform 1 expression decreases during development of cortex but slightly increases in cerebellum.</text>
</comment>
<comment type="domain">
    <text>The PDZ domain is required for interaction with GRID2, PLCB3, SLC9A3 and CFTR.</text>
</comment>
<comment type="miscellaneous">
    <molecule>Isoform 7</molecule>
    <text evidence="25">Contains 6 ANK repeats at positions 196-226, 230-259, 263-293, 297-326, 330-359, 363-393.</text>
</comment>
<comment type="similarity">
    <text evidence="25">Belongs to the SHANK family.</text>
</comment>
<comment type="sequence caution" evidence="25">
    <conflict type="frameshift">
        <sequence resource="EMBL-CDS" id="AAD42977"/>
    </conflict>
</comment>
<sequence>MKSLLNAFTKKEVPFREAPAYSNRRRRPPNTLAAPRVLLRSNSDNNLNAGAPEWAVCSAATSHRSLSPQLLQQTPSKPDGATKSLGSYAPGPRSRSPSLNRLGGAGEDGKRPQPPHWHVGSPFTPGANKDSLSTFEYPGPRRKLYSAVPGRLFVAIKPYQPQVDGEIPLHRGDRVKVLSIGEGGFWEGSARGHIGWFPAECVEEVQCKPRDSQAETRADRSKKLFRHYTVGSYDSFDAASDCIIEDKTVVLQKKDNEGFGFVLRGAKADTPIEEFTPTPAFPALQYLESVDEGGVAWQAGLRTGDFLIEVNNENVVKVGHRQVVNMIRQGGNHLVLKVVTVTRNLDPDDTARKKAPPPPKRAPTTALTLRSKSMTAELEELGLSLVDKASVRKKKDKPEEIVPASKPSRTAENVAIESRVATIKQRPTSRCFPAASDVNSVYERQGIAVMTPTVPGSPKGPFLGLPRGTMRRQKSIDSRIFLSGITEEERQFLAPPMLKFTRSLSMPDTSEDIPPPPQSVPPSPPPPSPTTYNCPRSPTPRVYGTIKPAFNQNPVAKVPPATRSDTVATMMREKGMFYRRELDRFSLDSEDVYSRSPAPQAAFRTKRGQMPENPYSEVGKIASKAVYVPAKPARRKGMLVKQSNVEDSPEKTCSIPIPTIIVKEPSTSSSGKSSQGSSMEIDPQATEPGQLRPDDSLTVSSPFAAAIAGAVRDREKRLEARRNSPAFLSTDLGDEDVGLGPPAPRMQPSKFPEEGGFGDEDETEQPLLPTPGAAPRELENHFLGGGEAGAQGEAGGPLSSTSKAKGPESGPAAALKSSSPASPENYVHPLTGRLLDPSSPLALALSARDRAMQESQQGHKGEAPKADLNKPLYIDTKMRPSVESGFPPVTRQNTRGPLRRQETENKYETDLSKDRRADDKKNMLINIVDTAQQKSAGLLMVHTVDIPVAGPPLEEEEDREDGDTKPDHSPSTVPEGVPKTEGALQISAAPEPAAAPGRTIVAAGSVEEAVILPFRIPPPPLASVDLDEDFLFTEPLPPPLEFANSFDIPDDRAASVPALADLVKQKKSDTPQPPSLNSSQPANSTDSKKPAGISNCLPSSFLPPPESFDAVTDSGIEEVDSRSSSDHHLETTSTISTVSSISTLSSEGGESMDTCTVYADGQAFVVDKPPVPPKPKMKPIVHKSNALYQDTLPEEDTDGFVIPPPAPPPPPGSAQAGVAKVIQPRTSKLWGDVTEVKSPILSGPKANVISELNSILQQMNRGKSVKPGEGLELPVGAKSANLAPRSPEVMSTVSGTRSTTVTFTVRPGTSQPITLQSRPPDYESRTSGPRRAPSPVVSPTELSKEILPTPPSAAAASPSPTLSDVFSLPSQSPAGDLFGLNPAGRSRSPSPSILQQPISNKPFTTKPVHLWTKPDVADWLESLNLGEHKETFMDNEIDGSHLPNLQKEDLIDLGVTRVGHRMNIERALKQLLDR</sequence>
<organism>
    <name type="scientific">Rattus norvegicus</name>
    <name type="common">Rat</name>
    <dbReference type="NCBI Taxonomy" id="10116"/>
    <lineage>
        <taxon>Eukaryota</taxon>
        <taxon>Metazoa</taxon>
        <taxon>Chordata</taxon>
        <taxon>Craniata</taxon>
        <taxon>Vertebrata</taxon>
        <taxon>Euteleostomi</taxon>
        <taxon>Mammalia</taxon>
        <taxon>Eutheria</taxon>
        <taxon>Euarchontoglires</taxon>
        <taxon>Glires</taxon>
        <taxon>Rodentia</taxon>
        <taxon>Myomorpha</taxon>
        <taxon>Muroidea</taxon>
        <taxon>Muridae</taxon>
        <taxon>Murinae</taxon>
        <taxon>Rattus</taxon>
    </lineage>
</organism>
<evidence type="ECO:0000250" key="1"/>
<evidence type="ECO:0000250" key="2">
    <source>
        <dbReference type="UniProtKB" id="Q80Z38"/>
    </source>
</evidence>
<evidence type="ECO:0000255" key="3"/>
<evidence type="ECO:0000255" key="4">
    <source>
        <dbReference type="PROSITE-ProRule" id="PRU00143"/>
    </source>
</evidence>
<evidence type="ECO:0000255" key="5">
    <source>
        <dbReference type="PROSITE-ProRule" id="PRU00184"/>
    </source>
</evidence>
<evidence type="ECO:0000255" key="6">
    <source>
        <dbReference type="PROSITE-ProRule" id="PRU00192"/>
    </source>
</evidence>
<evidence type="ECO:0000256" key="7">
    <source>
        <dbReference type="SAM" id="MobiDB-lite"/>
    </source>
</evidence>
<evidence type="ECO:0000269" key="8">
    <source>
    </source>
</evidence>
<evidence type="ECO:0000269" key="9">
    <source>
    </source>
</evidence>
<evidence type="ECO:0000269" key="10">
    <source>
    </source>
</evidence>
<evidence type="ECO:0000269" key="11">
    <source>
    </source>
</evidence>
<evidence type="ECO:0000269" key="12">
    <source>
    </source>
</evidence>
<evidence type="ECO:0000269" key="13">
    <source>
    </source>
</evidence>
<evidence type="ECO:0000269" key="14">
    <source>
    </source>
</evidence>
<evidence type="ECO:0000269" key="15">
    <source>
    </source>
</evidence>
<evidence type="ECO:0000269" key="16">
    <source>
    </source>
</evidence>
<evidence type="ECO:0000269" key="17">
    <source>
    </source>
</evidence>
<evidence type="ECO:0000269" key="18">
    <source>
    </source>
</evidence>
<evidence type="ECO:0000269" key="19">
    <source>
    </source>
</evidence>
<evidence type="ECO:0000269" key="20">
    <source>
    </source>
</evidence>
<evidence type="ECO:0000303" key="21">
    <source>
    </source>
</evidence>
<evidence type="ECO:0000303" key="22">
    <source>
    </source>
</evidence>
<evidence type="ECO:0000303" key="23">
    <source>
    </source>
</evidence>
<evidence type="ECO:0000303" key="24">
    <source>
    </source>
</evidence>
<evidence type="ECO:0000305" key="25"/>
<evidence type="ECO:0007744" key="26">
    <source>
    </source>
</evidence>
<evidence type="ECO:0007829" key="27">
    <source>
        <dbReference type="PDB" id="6CPJ"/>
    </source>
</evidence>
<name>SHAN2_RAT</name>
<proteinExistence type="evidence at protein level"/>